<keyword id="KW-0027">Amidation</keyword>
<keyword id="KW-0165">Cleavage on pair of basic residues</keyword>
<keyword id="KW-0903">Direct protein sequencing</keyword>
<keyword id="KW-1015">Disulfide bond</keyword>
<keyword id="KW-0301">Gamma-carboxyglutamic acid</keyword>
<keyword id="KW-0964">Secreted</keyword>
<keyword id="KW-0732">Signal</keyword>
<keyword id="KW-0800">Toxin</keyword>
<name>CXX_CONTE</name>
<reference key="1">
    <citation type="journal article" date="2005" name="Biochemistry">
        <title>Precursors of novel Gla-containing conotoxins contain a carboxy-terminal recognition site that directs gamma-carboxylation.</title>
        <authorList>
            <person name="Brown M.A."/>
            <person name="Begley G.S."/>
            <person name="Czerwiec E."/>
            <person name="Stenberg L.M."/>
            <person name="Jacobs M."/>
            <person name="Kalume D.E."/>
            <person name="Roepstorff P."/>
            <person name="Stenflo J."/>
            <person name="Furie B.C."/>
            <person name="Furie B."/>
        </authorList>
    </citation>
    <scope>NUCLEOTIDE SEQUENCE [MRNA]</scope>
    <scope>PROTEIN SEQUENCE OF 26-72</scope>
    <scope>GAMMA-CARBOXYGLUTAMATION AT GLU-30; GLU-34; GLU-37; GLU-40 AND GLU-41</scope>
    <scope>AMIDATION AT ASN-72</scope>
    <scope>MASS SPECTROMETRY</scope>
    <source>
        <tissue>Venom</tissue>
        <tissue>Venom duct</tissue>
    </source>
</reference>
<comment type="subcellular location">
    <subcellularLocation>
        <location>Secreted</location>
    </subcellularLocation>
</comment>
<comment type="tissue specificity">
    <text>Expressed by the venom duct.</text>
</comment>
<comment type="domain">
    <text>The cysteine framework is XII (C-C-C-C-CC-C-C).</text>
</comment>
<comment type="PTM">
    <text>Contains 4 disulfide bonds.</text>
</comment>
<comment type="mass spectrometry"/>
<comment type="similarity">
    <text evidence="3">Belongs to the conotoxin I2 superfamily.</text>
</comment>
<organism>
    <name type="scientific">Conus textile</name>
    <name type="common">Cloth-of-gold cone</name>
    <dbReference type="NCBI Taxonomy" id="6494"/>
    <lineage>
        <taxon>Eukaryota</taxon>
        <taxon>Metazoa</taxon>
        <taxon>Spiralia</taxon>
        <taxon>Lophotrochozoa</taxon>
        <taxon>Mollusca</taxon>
        <taxon>Gastropoda</taxon>
        <taxon>Caenogastropoda</taxon>
        <taxon>Neogastropoda</taxon>
        <taxon>Conoidea</taxon>
        <taxon>Conidae</taxon>
        <taxon>Conus</taxon>
        <taxon>Cylinder</taxon>
    </lineage>
</organism>
<protein>
    <recommendedName>
        <fullName>Conotoxin Gla-TxX</fullName>
    </recommendedName>
</protein>
<accession>Q5I4E6</accession>
<sequence>MSGHTSVSFLLLSIVALGMVATVICSCDSEFSSEFCERPEESCSCSTHTCCHWARRDQCMKPQRCISAQKGNGRRRLIHMQK</sequence>
<evidence type="ECO:0000250" key="1"/>
<evidence type="ECO:0000269" key="2">
    <source>
    </source>
</evidence>
<evidence type="ECO:0000305" key="3"/>
<dbReference type="EMBL" id="AY856069">
    <property type="protein sequence ID" value="AAW50949.1"/>
    <property type="molecule type" value="mRNA"/>
</dbReference>
<dbReference type="ConoServer" id="1056">
    <property type="toxin name" value="TxX precursor"/>
</dbReference>
<dbReference type="GO" id="GO:0005576">
    <property type="term" value="C:extracellular region"/>
    <property type="evidence" value="ECO:0007669"/>
    <property type="project" value="UniProtKB-SubCell"/>
</dbReference>
<dbReference type="GO" id="GO:0090729">
    <property type="term" value="F:toxin activity"/>
    <property type="evidence" value="ECO:0007669"/>
    <property type="project" value="UniProtKB-KW"/>
</dbReference>
<proteinExistence type="evidence at protein level"/>
<feature type="signal peptide" evidence="1">
    <location>
        <begin position="1"/>
        <end position="25"/>
    </location>
</feature>
<feature type="peptide" id="PRO_0000035124" description="Conotoxin Gla-TxX">
    <location>
        <begin position="26"/>
        <end position="72"/>
    </location>
</feature>
<feature type="propeptide" id="PRO_0000035125">
    <location>
        <begin position="77"/>
        <end position="82"/>
    </location>
</feature>
<feature type="modified residue" description="4-carboxyglutamate" evidence="2">
    <location>
        <position position="30"/>
    </location>
</feature>
<feature type="modified residue" description="4-carboxyglutamate" evidence="2">
    <location>
        <position position="34"/>
    </location>
</feature>
<feature type="modified residue" description="4-carboxyglutamate" evidence="2">
    <location>
        <position position="37"/>
    </location>
</feature>
<feature type="modified residue" description="4-carboxyglutamate" evidence="2">
    <location>
        <position position="40"/>
    </location>
</feature>
<feature type="modified residue" description="4-carboxyglutamate" evidence="2">
    <location>
        <position position="41"/>
    </location>
</feature>
<feature type="modified residue" description="Asparagine amide" evidence="2">
    <location>
        <position position="72"/>
    </location>
</feature>